<keyword id="KW-0106">Calcium</keyword>
<keyword id="KW-1015">Disulfide bond</keyword>
<keyword id="KW-0325">Glycoprotein</keyword>
<keyword id="KW-0326">Glycosidase</keyword>
<keyword id="KW-1032">Host cell membrane</keyword>
<keyword id="KW-1043">Host membrane</keyword>
<keyword id="KW-0378">Hydrolase</keyword>
<keyword id="KW-0472">Membrane</keyword>
<keyword id="KW-0479">Metal-binding</keyword>
<keyword id="KW-0735">Signal-anchor</keyword>
<keyword id="KW-0812">Transmembrane</keyword>
<keyword id="KW-1133">Transmembrane helix</keyword>
<keyword id="KW-0946">Virion</keyword>
<gene>
    <name evidence="1" type="primary">NA</name>
</gene>
<sequence length="469" mass="51664">MNPNQKIITIGSICMVVGIISLILQIGNIISIWISHSIQTGSQNHTGICNQSIITYKNSTWVNQTYVNISNTNVVAGQDTTSVILTGNSSLCPIRGWAIYSKDNGIRIGSKGDVFVIREPFISCSHLECRTFFLTQGALLNDKHSNGTVKDRSPYRALMSCPVGEAPSPYNSRFESVAWSASACHDGMGWLTIGISGPDNEAVAVLKYNGIITETIKSWRKKILRTQESECACVNGSCFTIMTDGPSDGLASYKIFKIEKGKVTKSIELNAPNSHYEECSCYPDTGKVMCVCRDNWHGSNRPWVSFDQNLDYQIGYICSGVFGDNPRPKDGTGSCGPVYVDGANGVKGFSYRYGNGVWIGRTKSTSSRHGFEMIWDPNGWTETDSKFSVRQDVVAMTDWSGYSGSFVQHPELTGLDCMRPCFWVELIRGQPKEKTIWTSGSSISFCGVNSDTVDWSWPDGAELPFTIDK</sequence>
<protein>
    <recommendedName>
        <fullName evidence="1">Neuraminidase</fullName>
        <ecNumber evidence="1">3.2.1.18</ecNumber>
    </recommendedName>
</protein>
<organismHost>
    <name type="scientific">Aves</name>
    <dbReference type="NCBI Taxonomy" id="8782"/>
</organismHost>
<organismHost>
    <name type="scientific">Homo sapiens</name>
    <name type="common">Human</name>
    <dbReference type="NCBI Taxonomy" id="9606"/>
</organismHost>
<organismHost>
    <name type="scientific">Sus scrofa</name>
    <name type="common">Pig</name>
    <dbReference type="NCBI Taxonomy" id="9823"/>
</organismHost>
<proteinExistence type="inferred from homology"/>
<reference key="1">
    <citation type="submission" date="2007-03" db="EMBL/GenBank/DDBJ databases">
        <title>The NIAID influenza genome sequencing project.</title>
        <authorList>
            <person name="Ghedin E."/>
            <person name="Spiro D."/>
            <person name="Miller N."/>
            <person name="Zaborsky J."/>
            <person name="Feldblyum T."/>
            <person name="Subbu V."/>
            <person name="Shumway M."/>
            <person name="Sparenborg J."/>
            <person name="Groveman L."/>
            <person name="Halpin R."/>
            <person name="Sitz J."/>
            <person name="Koo H."/>
            <person name="Salzberg S.L."/>
            <person name="Webster R.G."/>
            <person name="Hoffmann E."/>
            <person name="Krauss S."/>
            <person name="Naeve C."/>
            <person name="Bao Y."/>
            <person name="Bolotov P."/>
            <person name="Dernovoy D."/>
            <person name="Kiryutin B."/>
            <person name="Lipman D.J."/>
            <person name="Tatusova T."/>
        </authorList>
    </citation>
    <scope>NUCLEOTIDE SEQUENCE [GENOMIC RNA]</scope>
</reference>
<reference key="2">
    <citation type="submission" date="2007-03" db="EMBL/GenBank/DDBJ databases">
        <authorList>
            <consortium name="The NIAID Influenza Genome Sequencing Consortium"/>
        </authorList>
    </citation>
    <scope>NUCLEOTIDE SEQUENCE [GENOMIC RNA]</scope>
</reference>
<organism>
    <name type="scientific">Influenza A virus (strain A/USA:Phila/1935 H1N1)</name>
    <dbReference type="NCBI Taxonomy" id="425570"/>
    <lineage>
        <taxon>Viruses</taxon>
        <taxon>Riboviria</taxon>
        <taxon>Orthornavirae</taxon>
        <taxon>Negarnaviricota</taxon>
        <taxon>Polyploviricotina</taxon>
        <taxon>Insthoviricetes</taxon>
        <taxon>Articulavirales</taxon>
        <taxon>Orthomyxoviridae</taxon>
        <taxon>Alphainfluenzavirus</taxon>
        <taxon>Alphainfluenzavirus influenzae</taxon>
        <taxon>Influenza A virus</taxon>
    </lineage>
</organism>
<feature type="chain" id="PRO_0000372964" description="Neuraminidase">
    <location>
        <begin position="1"/>
        <end position="469"/>
    </location>
</feature>
<feature type="topological domain" description="Intravirion" evidence="1">
    <location>
        <begin position="1"/>
        <end position="6"/>
    </location>
</feature>
<feature type="transmembrane region" description="Helical" evidence="1">
    <location>
        <begin position="7"/>
        <end position="27"/>
    </location>
</feature>
<feature type="topological domain" description="Virion surface" evidence="1">
    <location>
        <begin position="28"/>
        <end position="469"/>
    </location>
</feature>
<feature type="region of interest" description="Involved in apical transport and lipid raft association" evidence="1">
    <location>
        <begin position="11"/>
        <end position="33"/>
    </location>
</feature>
<feature type="region of interest" description="Hypervariable stalk region" evidence="1">
    <location>
        <begin position="36"/>
        <end position="90"/>
    </location>
</feature>
<feature type="region of interest" description="Head of neuraminidase" evidence="1">
    <location>
        <begin position="91"/>
        <end position="469"/>
    </location>
</feature>
<feature type="active site" description="Proton donor/acceptor" evidence="1">
    <location>
        <position position="151"/>
    </location>
</feature>
<feature type="active site" description="Nucleophile" evidence="1">
    <location>
        <position position="402"/>
    </location>
</feature>
<feature type="binding site" evidence="1">
    <location>
        <position position="118"/>
    </location>
    <ligand>
        <name>substrate</name>
    </ligand>
</feature>
<feature type="binding site" evidence="1">
    <location>
        <position position="152"/>
    </location>
    <ligand>
        <name>substrate</name>
    </ligand>
</feature>
<feature type="binding site" evidence="1">
    <location>
        <begin position="277"/>
        <end position="278"/>
    </location>
    <ligand>
        <name>substrate</name>
    </ligand>
</feature>
<feature type="binding site" evidence="1">
    <location>
        <position position="293"/>
    </location>
    <ligand>
        <name>substrate</name>
    </ligand>
</feature>
<feature type="binding site" evidence="1">
    <location>
        <position position="294"/>
    </location>
    <ligand>
        <name>Ca(2+)</name>
        <dbReference type="ChEBI" id="CHEBI:29108"/>
    </ligand>
</feature>
<feature type="binding site" evidence="1">
    <location>
        <position position="298"/>
    </location>
    <ligand>
        <name>Ca(2+)</name>
        <dbReference type="ChEBI" id="CHEBI:29108"/>
    </ligand>
</feature>
<feature type="binding site" evidence="1">
    <location>
        <position position="324"/>
    </location>
    <ligand>
        <name>Ca(2+)</name>
        <dbReference type="ChEBI" id="CHEBI:29108"/>
    </ligand>
</feature>
<feature type="binding site" evidence="1">
    <location>
        <position position="344"/>
    </location>
    <ligand>
        <name>Ca(2+)</name>
        <dbReference type="ChEBI" id="CHEBI:29108"/>
    </ligand>
</feature>
<feature type="binding site" evidence="1">
    <location>
        <position position="368"/>
    </location>
    <ligand>
        <name>substrate</name>
    </ligand>
</feature>
<feature type="glycosylation site" description="N-linked (GlcNAc...) asparagine; by host" evidence="1">
    <location>
        <position position="44"/>
    </location>
</feature>
<feature type="glycosylation site" description="N-linked (GlcNAc...) asparagine; by host" evidence="1">
    <location>
        <position position="50"/>
    </location>
</feature>
<feature type="glycosylation site" description="N-linked (GlcNAc...) asparagine; by host" evidence="1">
    <location>
        <position position="58"/>
    </location>
</feature>
<feature type="glycosylation site" description="N-linked (GlcNAc...) asparagine; by host" evidence="1">
    <location>
        <position position="63"/>
    </location>
</feature>
<feature type="glycosylation site" description="N-linked (GlcNAc...) asparagine; by host" evidence="1">
    <location>
        <position position="68"/>
    </location>
</feature>
<feature type="glycosylation site" description="N-linked (GlcNAc...) asparagine; by host" evidence="1">
    <location>
        <position position="88"/>
    </location>
</feature>
<feature type="glycosylation site" description="N-linked (GlcNAc...) asparagine; by host" evidence="1">
    <location>
        <position position="146"/>
    </location>
</feature>
<feature type="glycosylation site" description="N-linked (GlcNAc...) asparagine; by host" evidence="1">
    <location>
        <position position="235"/>
    </location>
</feature>
<feature type="disulfide bond" evidence="1">
    <location>
        <begin position="92"/>
        <end position="417"/>
    </location>
</feature>
<feature type="disulfide bond" evidence="1">
    <location>
        <begin position="124"/>
        <end position="129"/>
    </location>
</feature>
<feature type="disulfide bond" evidence="1">
    <location>
        <begin position="184"/>
        <end position="231"/>
    </location>
</feature>
<feature type="disulfide bond" evidence="1">
    <location>
        <begin position="233"/>
        <end position="238"/>
    </location>
</feature>
<feature type="disulfide bond" evidence="1">
    <location>
        <begin position="279"/>
        <end position="292"/>
    </location>
</feature>
<feature type="disulfide bond" evidence="1">
    <location>
        <begin position="281"/>
        <end position="290"/>
    </location>
</feature>
<feature type="disulfide bond" evidence="1">
    <location>
        <begin position="318"/>
        <end position="335"/>
    </location>
</feature>
<feature type="disulfide bond" evidence="1">
    <location>
        <begin position="421"/>
        <end position="446"/>
    </location>
</feature>
<accession>A4GCM2</accession>
<name>NRAM_I35A3</name>
<comment type="function">
    <text evidence="1">Catalyzes the removal of terminal sialic acid residues from viral and cellular glycoconjugates. Cleaves off the terminal sialic acids on the glycosylated HA during virus budding to facilitate virus release. Additionally helps virus spread through the circulation by further removing sialic acids from the cell surface. These cleavages prevent self-aggregation and ensure the efficient spread of the progeny virus from cell to cell. Otherwise, infection would be limited to one round of replication. Described as a receptor-destroying enzyme because it cleaves a terminal sialic acid from the cellular receptors. May facilitate viral invasion of the upper airways by cleaving the sialic acid moieties on the mucin of the airway epithelial cells. Likely to plays a role in the budding process through its association with lipid rafts during intracellular transport. May additionally display a raft-association independent effect on budding. Plays a role in the determination of host range restriction on replication and virulence. Sialidase activity in late endosome/lysosome traffic seems to enhance virus replication.</text>
</comment>
<comment type="catalytic activity">
    <reaction evidence="1">
        <text>Hydrolysis of alpha-(2-&gt;3)-, alpha-(2-&gt;6)-, alpha-(2-&gt;8)- glycosidic linkages of terminal sialic acid residues in oligosaccharides, glycoproteins, glycolipids, colominic acid and synthetic substrates.</text>
        <dbReference type="EC" id="3.2.1.18"/>
    </reaction>
</comment>
<comment type="cofactor">
    <cofactor evidence="1">
        <name>Ca(2+)</name>
        <dbReference type="ChEBI" id="CHEBI:29108"/>
    </cofactor>
</comment>
<comment type="activity regulation">
    <text evidence="1">Inhibited by the neuraminidase inhibitors zanamivir (Relenza) and oseltamivir (Tamiflu). These drugs interfere with the release of progeny virus from infected cells and are effective against all influenza strains. Resistance to neuraminidase inhibitors is quite rare.</text>
</comment>
<comment type="subunit">
    <text evidence="1">Homotetramer.</text>
</comment>
<comment type="subcellular location">
    <subcellularLocation>
        <location evidence="1">Virion membrane</location>
    </subcellularLocation>
    <subcellularLocation>
        <location evidence="1">Host apical cell membrane</location>
        <topology evidence="1">Single-pass type II membrane protein</topology>
    </subcellularLocation>
    <text evidence="1">Preferentially accumulates at the apical plasma membrane in infected polarized epithelial cells, which is the virus assembly site. Uses lipid rafts for cell surface transport and apical sorting. In the virion, forms a mushroom-shaped spike on the surface of the membrane.</text>
</comment>
<comment type="domain">
    <text evidence="1">Intact N-terminus is essential for virion morphogenesis. Possesses two apical sorting signals, one in the ectodomain, which is likely to be a glycan, and the other in the transmembrane domain. The transmembrane domain also plays a role in lipid raft association.</text>
</comment>
<comment type="PTM">
    <text evidence="1">N-glycosylated.</text>
</comment>
<comment type="miscellaneous">
    <text>The influenza A genome consist of 8 RNA segments. Genetic variation of hemagglutinin and/or neuraminidase genes results in the emergence of new influenza strains. The mechanism of variation can be the result of point mutations or the result of genetic reassortment between segments of two different strains.</text>
</comment>
<comment type="similarity">
    <text evidence="1">Belongs to the glycosyl hydrolase 34 family.</text>
</comment>
<evidence type="ECO:0000255" key="1">
    <source>
        <dbReference type="HAMAP-Rule" id="MF_04071"/>
    </source>
</evidence>
<dbReference type="EC" id="3.2.1.18" evidence="1"/>
<dbReference type="EMBL" id="CY020471">
    <property type="protein sequence ID" value="ABO38387.1"/>
    <property type="molecule type" value="Viral_cRNA"/>
</dbReference>
<dbReference type="SMR" id="A4GCM2"/>
<dbReference type="CAZy" id="GH34">
    <property type="family name" value="Glycoside Hydrolase Family 34"/>
</dbReference>
<dbReference type="GlyCosmos" id="A4GCM2">
    <property type="glycosylation" value="8 sites, No reported glycans"/>
</dbReference>
<dbReference type="PRO" id="PR:A4GCM2"/>
<dbReference type="Proteomes" id="UP000000829">
    <property type="component" value="Genome"/>
</dbReference>
<dbReference type="GO" id="GO:0020002">
    <property type="term" value="C:host cell plasma membrane"/>
    <property type="evidence" value="ECO:0007669"/>
    <property type="project" value="UniProtKB-SubCell"/>
</dbReference>
<dbReference type="GO" id="GO:0016020">
    <property type="term" value="C:membrane"/>
    <property type="evidence" value="ECO:0007669"/>
    <property type="project" value="UniProtKB-UniRule"/>
</dbReference>
<dbReference type="GO" id="GO:0055036">
    <property type="term" value="C:virion membrane"/>
    <property type="evidence" value="ECO:0007669"/>
    <property type="project" value="UniProtKB-SubCell"/>
</dbReference>
<dbReference type="GO" id="GO:0004308">
    <property type="term" value="F:exo-alpha-sialidase activity"/>
    <property type="evidence" value="ECO:0007669"/>
    <property type="project" value="UniProtKB-UniRule"/>
</dbReference>
<dbReference type="GO" id="GO:0046872">
    <property type="term" value="F:metal ion binding"/>
    <property type="evidence" value="ECO:0007669"/>
    <property type="project" value="UniProtKB-UniRule"/>
</dbReference>
<dbReference type="GO" id="GO:0005975">
    <property type="term" value="P:carbohydrate metabolic process"/>
    <property type="evidence" value="ECO:0007669"/>
    <property type="project" value="InterPro"/>
</dbReference>
<dbReference type="GO" id="GO:0046761">
    <property type="term" value="P:viral budding from plasma membrane"/>
    <property type="evidence" value="ECO:0007669"/>
    <property type="project" value="UniProtKB-UniRule"/>
</dbReference>
<dbReference type="CDD" id="cd15483">
    <property type="entry name" value="Influenza_NA"/>
    <property type="match status" value="1"/>
</dbReference>
<dbReference type="FunFam" id="2.120.10.10:FF:000001">
    <property type="entry name" value="Neuraminidase"/>
    <property type="match status" value="1"/>
</dbReference>
<dbReference type="Gene3D" id="2.120.10.10">
    <property type="match status" value="1"/>
</dbReference>
<dbReference type="HAMAP" id="MF_04071">
    <property type="entry name" value="INFV_NRAM"/>
    <property type="match status" value="1"/>
</dbReference>
<dbReference type="InterPro" id="IPR001860">
    <property type="entry name" value="Glyco_hydro_34"/>
</dbReference>
<dbReference type="InterPro" id="IPR033654">
    <property type="entry name" value="Sialidase_Influenza_A/B"/>
</dbReference>
<dbReference type="InterPro" id="IPR036278">
    <property type="entry name" value="Sialidase_sf"/>
</dbReference>
<dbReference type="Pfam" id="PF00064">
    <property type="entry name" value="Neur"/>
    <property type="match status" value="1"/>
</dbReference>
<dbReference type="SUPFAM" id="SSF50939">
    <property type="entry name" value="Sialidases"/>
    <property type="match status" value="1"/>
</dbReference>